<keyword id="KW-0167">Capsid protein</keyword>
<keyword id="KW-1185">Reference proteome</keyword>
<keyword id="KW-0946">Virion</keyword>
<organism>
    <name type="scientific">Trichoplusia ni ascovirus 2c</name>
    <name type="common">TnAV-2c</name>
    <dbReference type="NCBI Taxonomy" id="328615"/>
    <lineage>
        <taxon>Viruses</taxon>
        <taxon>Varidnaviria</taxon>
        <taxon>Bamfordvirae</taxon>
        <taxon>Nucleocytoviricota</taxon>
        <taxon>Megaviricetes</taxon>
        <taxon>Pimascovirales</taxon>
        <taxon>Ascoviridae</taxon>
        <taxon>Ascovirus</taxon>
    </lineage>
</organism>
<accession>Q4U3U9</accession>
<dbReference type="EMBL" id="DQ517337">
    <property type="protein sequence ID" value="AAY43138.2"/>
    <property type="molecule type" value="Genomic_DNA"/>
</dbReference>
<dbReference type="EMBL" id="DQ517337">
    <property type="protein sequence ID" value="ABF70662.1"/>
    <property type="molecule type" value="Genomic_DNA"/>
</dbReference>
<dbReference type="RefSeq" id="YP_803368.1">
    <property type="nucleotide sequence ID" value="NC_008518.1"/>
</dbReference>
<dbReference type="RefSeq" id="YP_803375.1">
    <property type="nucleotide sequence ID" value="NC_008518.1"/>
</dbReference>
<dbReference type="SMR" id="Q4U3U9"/>
<dbReference type="KEGG" id="vg:5141743"/>
<dbReference type="KEGG" id="vg:5141797"/>
<dbReference type="OrthoDB" id="5386at10239"/>
<dbReference type="Proteomes" id="UP000001323">
    <property type="component" value="Genome"/>
</dbReference>
<dbReference type="GO" id="GO:0019028">
    <property type="term" value="C:viral capsid"/>
    <property type="evidence" value="ECO:0007669"/>
    <property type="project" value="UniProtKB-KW"/>
</dbReference>
<dbReference type="GO" id="GO:0005198">
    <property type="term" value="F:structural molecule activity"/>
    <property type="evidence" value="ECO:0007669"/>
    <property type="project" value="InterPro"/>
</dbReference>
<dbReference type="Gene3D" id="2.70.9.10">
    <property type="entry name" value="Adenovirus Type 2 Hexon, domain 4"/>
    <property type="match status" value="1"/>
</dbReference>
<dbReference type="Gene3D" id="2.70.9.20">
    <property type="entry name" value="Major capsid protein Vp54"/>
    <property type="match status" value="1"/>
</dbReference>
<dbReference type="InterPro" id="IPR031654">
    <property type="entry name" value="Capsid_N"/>
</dbReference>
<dbReference type="InterPro" id="IPR007542">
    <property type="entry name" value="MCP_C"/>
</dbReference>
<dbReference type="InterPro" id="IPR038519">
    <property type="entry name" value="MCP_C_sf"/>
</dbReference>
<dbReference type="InterPro" id="IPR016112">
    <property type="entry name" value="VP_dsDNA_II"/>
</dbReference>
<dbReference type="Pfam" id="PF16903">
    <property type="entry name" value="Capsid_N"/>
    <property type="match status" value="1"/>
</dbReference>
<dbReference type="Pfam" id="PF04451">
    <property type="entry name" value="Capsid_NCLDV"/>
    <property type="match status" value="1"/>
</dbReference>
<dbReference type="SUPFAM" id="SSF49749">
    <property type="entry name" value="Group II dsDNA viruses VP"/>
    <property type="match status" value="2"/>
</dbReference>
<name>CAPSD_TNAVC</name>
<protein>
    <recommendedName>
        <fullName>Major capsid protein</fullName>
    </recommendedName>
</protein>
<feature type="chain" id="PRO_0000330589" description="Major capsid protein">
    <location>
        <begin position="1"/>
        <end position="480"/>
    </location>
</feature>
<comment type="function">
    <text>Major protein of the capsid.</text>
</comment>
<comment type="subcellular location">
    <subcellularLocation>
        <location>Virion</location>
    </subcellularLocation>
</comment>
<organismHost>
    <name type="scientific">Noctuidae</name>
    <name type="common">owlet moths</name>
    <dbReference type="NCBI Taxonomy" id="7100"/>
</organismHost>
<sequence>MSGDPKIEATAVAKTKEDTNKVDIKAMRQFVEIKGGIENEIYNPENATTYFYREVRRSVPFIKVPEIIKPNGSVNFGGQCQFNIPRCGDYLLNLTLYIEIPKIELNITETAAVPGGAAASLHRVGWVKNLAHQLVKEIKLNIDDTTVVNIDTAFLDMWSEFMTDNGKFDGYKEMIGGSKELWDLDDKVAGAGTIILPLPLFFSRDSGLALPLSSLISSDISVEVLLRKWDEVLLLEDINNSKNKVIKADDIKDGEPKLTSIKLIGTYAVASKYEVNKTRCDDRRMLIEKPFKASEYELPVFDSGKLDEPIPINMEKINGAIKALFFAVKNTSRSNEHSVYKVGLPIPGTLRIDGGSLHALSEIGINLAEHVFVPSLPIEYYSYQQPYEHAKRIPNNRDLFMYSFCLDVGDVDPMGSINPKLLAKRLTFQIKPTKDLAEATKNKQTFKFITYALCNRLVSIRQGKFTLLSQSMYGEDGEDE</sequence>
<gene>
    <name type="primary">MCP-1</name>
    <name type="ORF">ORF145</name>
</gene>
<gene>
    <name type="primary">MCP-2</name>
    <name type="ORF">ORF153</name>
</gene>
<reference key="1">
    <citation type="journal article" date="2006" name="Virology">
        <title>Sequence and organization of the Trichoplusia ni ascovirus 2c (Ascoviridae) genome.</title>
        <authorList>
            <person name="Wang L."/>
            <person name="Xue J."/>
            <person name="Seaborn C.P."/>
            <person name="Arif B.M."/>
            <person name="Cheng X.W."/>
        </authorList>
    </citation>
    <scope>NUCLEOTIDE SEQUENCE [LARGE SCALE GENOMIC DNA]</scope>
</reference>
<reference key="2">
    <citation type="journal article" date="2007" name="J. Gen. Virol.">
        <title>Identification of Trichoplusia ni ascovirus 2c virion structural proteins.</title>
        <authorList>
            <person name="Cui L."/>
            <person name="Cheng X."/>
            <person name="Li L."/>
            <person name="Li J."/>
        </authorList>
    </citation>
    <scope>IDENTIFICATION BY MASS SPECTROMETRY</scope>
</reference>
<proteinExistence type="evidence at protein level"/>